<gene>
    <name evidence="8" type="primary">JMJ17</name>
    <name evidence="10" type="ordered locus">At1g63490</name>
    <name evidence="11" type="ORF">F2K11.14</name>
</gene>
<organism>
    <name type="scientific">Arabidopsis thaliana</name>
    <name type="common">Mouse-ear cress</name>
    <dbReference type="NCBI Taxonomy" id="3702"/>
    <lineage>
        <taxon>Eukaryota</taxon>
        <taxon>Viridiplantae</taxon>
        <taxon>Streptophyta</taxon>
        <taxon>Embryophyta</taxon>
        <taxon>Tracheophyta</taxon>
        <taxon>Spermatophyta</taxon>
        <taxon>Magnoliopsida</taxon>
        <taxon>eudicotyledons</taxon>
        <taxon>Gunneridae</taxon>
        <taxon>Pentapetalae</taxon>
        <taxon>rosids</taxon>
        <taxon>malvids</taxon>
        <taxon>Brassicales</taxon>
        <taxon>Brassicaceae</taxon>
        <taxon>Camelineae</taxon>
        <taxon>Arabidopsis</taxon>
    </lineage>
</organism>
<keyword id="KW-0938">Abscisic acid signaling pathway</keyword>
<keyword id="KW-0217">Developmental protein</keyword>
<keyword id="KW-0408">Iron</keyword>
<keyword id="KW-0479">Metal-binding</keyword>
<keyword id="KW-0539">Nucleus</keyword>
<keyword id="KW-0560">Oxidoreductase</keyword>
<keyword id="KW-1185">Reference proteome</keyword>
<keyword id="KW-0677">Repeat</keyword>
<keyword id="KW-0678">Repressor</keyword>
<keyword id="KW-0346">Stress response</keyword>
<keyword id="KW-0804">Transcription</keyword>
<keyword id="KW-0805">Transcription regulation</keyword>
<keyword id="KW-0862">Zinc</keyword>
<keyword id="KW-0863">Zinc-finger</keyword>
<reference key="1">
    <citation type="journal article" date="2000" name="Nature">
        <title>Sequence and analysis of chromosome 1 of the plant Arabidopsis thaliana.</title>
        <authorList>
            <person name="Theologis A."/>
            <person name="Ecker J.R."/>
            <person name="Palm C.J."/>
            <person name="Federspiel N.A."/>
            <person name="Kaul S."/>
            <person name="White O."/>
            <person name="Alonso J."/>
            <person name="Altafi H."/>
            <person name="Araujo R."/>
            <person name="Bowman C.L."/>
            <person name="Brooks S.Y."/>
            <person name="Buehler E."/>
            <person name="Chan A."/>
            <person name="Chao Q."/>
            <person name="Chen H."/>
            <person name="Cheuk R.F."/>
            <person name="Chin C.W."/>
            <person name="Chung M.K."/>
            <person name="Conn L."/>
            <person name="Conway A.B."/>
            <person name="Conway A.R."/>
            <person name="Creasy T.H."/>
            <person name="Dewar K."/>
            <person name="Dunn P."/>
            <person name="Etgu P."/>
            <person name="Feldblyum T.V."/>
            <person name="Feng J.-D."/>
            <person name="Fong B."/>
            <person name="Fujii C.Y."/>
            <person name="Gill J.E."/>
            <person name="Goldsmith A.D."/>
            <person name="Haas B."/>
            <person name="Hansen N.F."/>
            <person name="Hughes B."/>
            <person name="Huizar L."/>
            <person name="Hunter J.L."/>
            <person name="Jenkins J."/>
            <person name="Johnson-Hopson C."/>
            <person name="Khan S."/>
            <person name="Khaykin E."/>
            <person name="Kim C.J."/>
            <person name="Koo H.L."/>
            <person name="Kremenetskaia I."/>
            <person name="Kurtz D.B."/>
            <person name="Kwan A."/>
            <person name="Lam B."/>
            <person name="Langin-Hooper S."/>
            <person name="Lee A."/>
            <person name="Lee J.M."/>
            <person name="Lenz C.A."/>
            <person name="Li J.H."/>
            <person name="Li Y.-P."/>
            <person name="Lin X."/>
            <person name="Liu S.X."/>
            <person name="Liu Z.A."/>
            <person name="Luros J.S."/>
            <person name="Maiti R."/>
            <person name="Marziali A."/>
            <person name="Militscher J."/>
            <person name="Miranda M."/>
            <person name="Nguyen M."/>
            <person name="Nierman W.C."/>
            <person name="Osborne B.I."/>
            <person name="Pai G."/>
            <person name="Peterson J."/>
            <person name="Pham P.K."/>
            <person name="Rizzo M."/>
            <person name="Rooney T."/>
            <person name="Rowley D."/>
            <person name="Sakano H."/>
            <person name="Salzberg S.L."/>
            <person name="Schwartz J.R."/>
            <person name="Shinn P."/>
            <person name="Southwick A.M."/>
            <person name="Sun H."/>
            <person name="Tallon L.J."/>
            <person name="Tambunga G."/>
            <person name="Toriumi M.J."/>
            <person name="Town C.D."/>
            <person name="Utterback T."/>
            <person name="Van Aken S."/>
            <person name="Vaysberg M."/>
            <person name="Vysotskaia V.S."/>
            <person name="Walker M."/>
            <person name="Wu D."/>
            <person name="Yu G."/>
            <person name="Fraser C.M."/>
            <person name="Venter J.C."/>
            <person name="Davis R.W."/>
        </authorList>
    </citation>
    <scope>NUCLEOTIDE SEQUENCE [LARGE SCALE GENOMIC DNA]</scope>
    <source>
        <strain>cv. Columbia</strain>
    </source>
</reference>
<reference key="2">
    <citation type="journal article" date="2017" name="Plant J.">
        <title>Araport11: a complete reannotation of the Arabidopsis thaliana reference genome.</title>
        <authorList>
            <person name="Cheng C.Y."/>
            <person name="Krishnakumar V."/>
            <person name="Chan A.P."/>
            <person name="Thibaud-Nissen F."/>
            <person name="Schobel S."/>
            <person name="Town C.D."/>
        </authorList>
    </citation>
    <scope>GENOME REANNOTATION</scope>
    <source>
        <strain>cv. Columbia</strain>
    </source>
</reference>
<reference key="3">
    <citation type="journal article" date="2003" name="Science">
        <title>Empirical analysis of transcriptional activity in the Arabidopsis genome.</title>
        <authorList>
            <person name="Yamada K."/>
            <person name="Lim J."/>
            <person name="Dale J.M."/>
            <person name="Chen H."/>
            <person name="Shinn P."/>
            <person name="Palm C.J."/>
            <person name="Southwick A.M."/>
            <person name="Wu H.C."/>
            <person name="Kim C.J."/>
            <person name="Nguyen M."/>
            <person name="Pham P.K."/>
            <person name="Cheuk R.F."/>
            <person name="Karlin-Newmann G."/>
            <person name="Liu S.X."/>
            <person name="Lam B."/>
            <person name="Sakano H."/>
            <person name="Wu T."/>
            <person name="Yu G."/>
            <person name="Miranda M."/>
            <person name="Quach H.L."/>
            <person name="Tripp M."/>
            <person name="Chang C.H."/>
            <person name="Lee J.M."/>
            <person name="Toriumi M.J."/>
            <person name="Chan M.M."/>
            <person name="Tang C.C."/>
            <person name="Onodera C.S."/>
            <person name="Deng J.M."/>
            <person name="Akiyama K."/>
            <person name="Ansari Y."/>
            <person name="Arakawa T."/>
            <person name="Banh J."/>
            <person name="Banno F."/>
            <person name="Bowser L."/>
            <person name="Brooks S.Y."/>
            <person name="Carninci P."/>
            <person name="Chao Q."/>
            <person name="Choy N."/>
            <person name="Enju A."/>
            <person name="Goldsmith A.D."/>
            <person name="Gurjal M."/>
            <person name="Hansen N.F."/>
            <person name="Hayashizaki Y."/>
            <person name="Johnson-Hopson C."/>
            <person name="Hsuan V.W."/>
            <person name="Iida K."/>
            <person name="Karnes M."/>
            <person name="Khan S."/>
            <person name="Koesema E."/>
            <person name="Ishida J."/>
            <person name="Jiang P.X."/>
            <person name="Jones T."/>
            <person name="Kawai J."/>
            <person name="Kamiya A."/>
            <person name="Meyers C."/>
            <person name="Nakajima M."/>
            <person name="Narusaka M."/>
            <person name="Seki M."/>
            <person name="Sakurai T."/>
            <person name="Satou M."/>
            <person name="Tamse R."/>
            <person name="Vaysberg M."/>
            <person name="Wallender E.K."/>
            <person name="Wong C."/>
            <person name="Yamamura Y."/>
            <person name="Yuan S."/>
            <person name="Shinozaki K."/>
            <person name="Davis R.W."/>
            <person name="Theologis A."/>
            <person name="Ecker J.R."/>
        </authorList>
    </citation>
    <scope>NUCLEOTIDE SEQUENCE [LARGE SCALE MRNA] OF 66-1208</scope>
    <source>
        <strain>cv. Columbia</strain>
    </source>
</reference>
<reference key="4">
    <citation type="journal article" date="2008" name="J. Integr. Plant Biol.">
        <title>Comparative analysis of JmjC domain-containing proteins reveals the potential histone demethylases in Arabidopsis and rice.</title>
        <authorList>
            <person name="Lu F."/>
            <person name="Li G."/>
            <person name="Cui X."/>
            <person name="Liu C."/>
            <person name="Wang X.-J."/>
            <person name="Cao X."/>
        </authorList>
    </citation>
    <scope>GENE FAMILY</scope>
    <scope>NOMENCLATURE</scope>
    <scope>TISSUE SPECIFICITY</scope>
</reference>
<reference key="5">
    <citation type="journal article" date="2019" name="New Phytol.">
        <title>Arabidopsis histone H3K4 demethylase JMJ17 functions in dehydration stress response.</title>
        <authorList>
            <person name="Huang S."/>
            <person name="Zhang A."/>
            <person name="Jin J.B."/>
            <person name="Zhao B."/>
            <person name="Wang T.-J."/>
            <person name="Wu Y."/>
            <person name="Wang S."/>
            <person name="Liu Y."/>
            <person name="Wang J."/>
            <person name="Guo P."/>
            <person name="Ahmad R."/>
            <person name="Liu B."/>
            <person name="Xu Z.-Y."/>
        </authorList>
    </citation>
    <scope>FUNCTION</scope>
    <scope>MUTAGENESIS OF HIS-172 AND GLU-174</scope>
    <scope>DISRUPTION PHENOTYPE</scope>
    <scope>CATALYTIC ACTIVITY</scope>
    <scope>TISSUE SPECIFICITY</scope>
    <scope>DEVELOPMENTAL STAGE</scope>
    <scope>SUBCELLULAR LOCATION</scope>
    <scope>REPRESSION BY DROUGHT AND ABSCISIC ACID</scope>
    <source>
        <strain>cv. Columbia</strain>
    </source>
</reference>
<proteinExistence type="evidence at protein level"/>
<accession>F4I240</accession>
<accession>Q94BQ7</accession>
<accession>Q9SH34</accession>
<evidence type="ECO:0000250" key="1">
    <source>
        <dbReference type="UniProtKB" id="Q8GUI6"/>
    </source>
</evidence>
<evidence type="ECO:0000255" key="2"/>
<evidence type="ECO:0000255" key="3">
    <source>
        <dbReference type="PROSITE-ProRule" id="PRU00146"/>
    </source>
</evidence>
<evidence type="ECO:0000255" key="4">
    <source>
        <dbReference type="PROSITE-ProRule" id="PRU00538"/>
    </source>
</evidence>
<evidence type="ECO:0000255" key="5">
    <source>
        <dbReference type="PROSITE-ProRule" id="PRU00768"/>
    </source>
</evidence>
<evidence type="ECO:0000269" key="6">
    <source>
    </source>
</evidence>
<evidence type="ECO:0000269" key="7">
    <source>
    </source>
</evidence>
<evidence type="ECO:0000303" key="8">
    <source>
    </source>
</evidence>
<evidence type="ECO:0000305" key="9"/>
<evidence type="ECO:0000312" key="10">
    <source>
        <dbReference type="Araport" id="AT1G63490"/>
    </source>
</evidence>
<evidence type="ECO:0000312" key="11">
    <source>
        <dbReference type="EMBL" id="AAF19696.1"/>
    </source>
</evidence>
<dbReference type="EC" id="1.14.11.67" evidence="7"/>
<dbReference type="EMBL" id="AC008047">
    <property type="protein sequence ID" value="AAF19696.1"/>
    <property type="status" value="ALT_SEQ"/>
    <property type="molecule type" value="Genomic_DNA"/>
</dbReference>
<dbReference type="EMBL" id="CP002684">
    <property type="protein sequence ID" value="AEE34105.2"/>
    <property type="molecule type" value="Genomic_DNA"/>
</dbReference>
<dbReference type="EMBL" id="AY039958">
    <property type="protein sequence ID" value="AAK64062.1"/>
    <property type="status" value="ALT_INIT"/>
    <property type="molecule type" value="mRNA"/>
</dbReference>
<dbReference type="EMBL" id="BT011572">
    <property type="protein sequence ID" value="AAS46255.1"/>
    <property type="molecule type" value="mRNA"/>
</dbReference>
<dbReference type="PIR" id="D96660">
    <property type="entry name" value="D96660"/>
</dbReference>
<dbReference type="RefSeq" id="NP_001319304.1">
    <property type="nucleotide sequence ID" value="NM_001334100.1"/>
</dbReference>
<dbReference type="SMR" id="F4I240"/>
<dbReference type="FunCoup" id="F4I240">
    <property type="interactions" value="3488"/>
</dbReference>
<dbReference type="iPTMnet" id="F4I240"/>
<dbReference type="ProteomicsDB" id="202296"/>
<dbReference type="EnsemblPlants" id="AT1G63490.1">
    <property type="protein sequence ID" value="AT1G63490.1"/>
    <property type="gene ID" value="AT1G63490"/>
</dbReference>
<dbReference type="GeneID" id="842655"/>
<dbReference type="Gramene" id="AT1G63490.1">
    <property type="protein sequence ID" value="AT1G63490.1"/>
    <property type="gene ID" value="AT1G63490"/>
</dbReference>
<dbReference type="KEGG" id="ath:AT1G63490"/>
<dbReference type="Araport" id="AT1G63490"/>
<dbReference type="TAIR" id="AT1G63490">
    <property type="gene designation" value="JMJ17"/>
</dbReference>
<dbReference type="HOGENOM" id="CLU_000946_0_0_1"/>
<dbReference type="PRO" id="PR:F4I240"/>
<dbReference type="Proteomes" id="UP000006548">
    <property type="component" value="Chromosome 1"/>
</dbReference>
<dbReference type="ExpressionAtlas" id="F4I240">
    <property type="expression patterns" value="baseline and differential"/>
</dbReference>
<dbReference type="GO" id="GO:0005634">
    <property type="term" value="C:nucleus"/>
    <property type="evidence" value="ECO:0000314"/>
    <property type="project" value="UniProtKB"/>
</dbReference>
<dbReference type="GO" id="GO:0031490">
    <property type="term" value="F:chromatin DNA binding"/>
    <property type="evidence" value="ECO:0000314"/>
    <property type="project" value="UniProtKB"/>
</dbReference>
<dbReference type="GO" id="GO:0032453">
    <property type="term" value="F:histone H3K4 demethylase activity"/>
    <property type="evidence" value="ECO:0000314"/>
    <property type="project" value="UniProtKB"/>
</dbReference>
<dbReference type="GO" id="GO:0016491">
    <property type="term" value="F:oxidoreductase activity"/>
    <property type="evidence" value="ECO:0007669"/>
    <property type="project" value="UniProtKB-KW"/>
</dbReference>
<dbReference type="GO" id="GO:0043565">
    <property type="term" value="F:sequence-specific DNA binding"/>
    <property type="evidence" value="ECO:0000314"/>
    <property type="project" value="UniProtKB"/>
</dbReference>
<dbReference type="GO" id="GO:0008270">
    <property type="term" value="F:zinc ion binding"/>
    <property type="evidence" value="ECO:0007669"/>
    <property type="project" value="UniProtKB-KW"/>
</dbReference>
<dbReference type="GO" id="GO:0009738">
    <property type="term" value="P:abscisic acid-activated signaling pathway"/>
    <property type="evidence" value="ECO:0000315"/>
    <property type="project" value="UniProtKB"/>
</dbReference>
<dbReference type="GO" id="GO:0048589">
    <property type="term" value="P:developmental growth"/>
    <property type="evidence" value="ECO:0000315"/>
    <property type="project" value="UniProtKB"/>
</dbReference>
<dbReference type="GO" id="GO:0045814">
    <property type="term" value="P:negative regulation of gene expression, epigenetic"/>
    <property type="evidence" value="ECO:0000315"/>
    <property type="project" value="UniProtKB"/>
</dbReference>
<dbReference type="GO" id="GO:0099402">
    <property type="term" value="P:plant organ development"/>
    <property type="evidence" value="ECO:0000315"/>
    <property type="project" value="UniProtKB"/>
</dbReference>
<dbReference type="GO" id="GO:0090333">
    <property type="term" value="P:regulation of stomatal closure"/>
    <property type="evidence" value="ECO:0000315"/>
    <property type="project" value="UniProtKB"/>
</dbReference>
<dbReference type="GO" id="GO:0009737">
    <property type="term" value="P:response to abscisic acid"/>
    <property type="evidence" value="ECO:0000270"/>
    <property type="project" value="UniProtKB"/>
</dbReference>
<dbReference type="GO" id="GO:0009414">
    <property type="term" value="P:response to water deprivation"/>
    <property type="evidence" value="ECO:0000315"/>
    <property type="project" value="UniProtKB"/>
</dbReference>
<dbReference type="FunFam" id="2.60.120.650:FF:000078">
    <property type="entry name" value="Predicted protein"/>
    <property type="match status" value="1"/>
</dbReference>
<dbReference type="FunFam" id="3.30.40.10:FF:000507">
    <property type="entry name" value="Transcription factor jumonji (JmjC) domain-containing protein"/>
    <property type="match status" value="1"/>
</dbReference>
<dbReference type="Gene3D" id="2.60.120.650">
    <property type="entry name" value="Cupin"/>
    <property type="match status" value="1"/>
</dbReference>
<dbReference type="Gene3D" id="3.30.40.10">
    <property type="entry name" value="Zinc/RING finger domain, C3HC4 (zinc finger)"/>
    <property type="match status" value="2"/>
</dbReference>
<dbReference type="InterPro" id="IPR003347">
    <property type="entry name" value="JmjC_dom"/>
</dbReference>
<dbReference type="InterPro" id="IPR013637">
    <property type="entry name" value="Lys_sp_deMease-like_dom"/>
</dbReference>
<dbReference type="InterPro" id="IPR019786">
    <property type="entry name" value="Zinc_finger_PHD-type_CS"/>
</dbReference>
<dbReference type="InterPro" id="IPR004198">
    <property type="entry name" value="Znf_C5HC2"/>
</dbReference>
<dbReference type="InterPro" id="IPR011011">
    <property type="entry name" value="Znf_FYVE_PHD"/>
</dbReference>
<dbReference type="InterPro" id="IPR001965">
    <property type="entry name" value="Znf_PHD"/>
</dbReference>
<dbReference type="InterPro" id="IPR019787">
    <property type="entry name" value="Znf_PHD-finger"/>
</dbReference>
<dbReference type="InterPro" id="IPR013083">
    <property type="entry name" value="Znf_RING/FYVE/PHD"/>
</dbReference>
<dbReference type="PANTHER" id="PTHR10694">
    <property type="entry name" value="LYSINE-SPECIFIC DEMETHYLASE"/>
    <property type="match status" value="1"/>
</dbReference>
<dbReference type="PANTHER" id="PTHR10694:SF133">
    <property type="entry name" value="LYSINE-SPECIFIC DEMETHYLASE JMJ17"/>
    <property type="match status" value="1"/>
</dbReference>
<dbReference type="Pfam" id="PF02373">
    <property type="entry name" value="JmjC"/>
    <property type="match status" value="1"/>
</dbReference>
<dbReference type="Pfam" id="PF00628">
    <property type="entry name" value="PHD"/>
    <property type="match status" value="2"/>
</dbReference>
<dbReference type="Pfam" id="PF08429">
    <property type="entry name" value="PLU-1"/>
    <property type="match status" value="2"/>
</dbReference>
<dbReference type="Pfam" id="PF02928">
    <property type="entry name" value="zf-C5HC2"/>
    <property type="match status" value="1"/>
</dbReference>
<dbReference type="SMART" id="SM00558">
    <property type="entry name" value="JmjC"/>
    <property type="match status" value="1"/>
</dbReference>
<dbReference type="SMART" id="SM00249">
    <property type="entry name" value="PHD"/>
    <property type="match status" value="2"/>
</dbReference>
<dbReference type="SUPFAM" id="SSF51197">
    <property type="entry name" value="Clavaminate synthase-like"/>
    <property type="match status" value="1"/>
</dbReference>
<dbReference type="SUPFAM" id="SSF57903">
    <property type="entry name" value="FYVE/PHD zinc finger"/>
    <property type="match status" value="2"/>
</dbReference>
<dbReference type="PROSITE" id="PS01186">
    <property type="entry name" value="EGF_2"/>
    <property type="match status" value="1"/>
</dbReference>
<dbReference type="PROSITE" id="PS51184">
    <property type="entry name" value="JMJC"/>
    <property type="match status" value="1"/>
</dbReference>
<dbReference type="PROSITE" id="PS01359">
    <property type="entry name" value="ZF_PHD_1"/>
    <property type="match status" value="1"/>
</dbReference>
<comment type="function">
    <text evidence="7">Functions as a histone H3 'Lys-4' (H3K4me) demethylase involved in the regulation of gene expression (PubMed:31038749). Active on H3K4me1, H3K4me2 and H3K4me3 (PubMed:31038749). Repressor of the abscisic acid (ABA) signaling pathway, especially during stomatal closure regulation (PubMed:31038749). Negative regulator of responses to dehydration stress by binding directly to the chromatin of SRK2E/OST1 and demethylating H3K4me3 to regulates its expression (PubMed:31038749). Together with JMJ14 and JMJ16, required for plant growth and development (PubMed:31038749).</text>
</comment>
<comment type="catalytic activity">
    <reaction evidence="7">
        <text>N(6),N(6),N(6)-trimethyl-L-lysyl(4)-[histone H3] + 2-oxoglutarate + O2 = N(6),N(6)-dimethyl-L-lysyl(4)-[histone H3] + formaldehyde + succinate + CO2</text>
        <dbReference type="Rhea" id="RHEA:60212"/>
        <dbReference type="Rhea" id="RHEA-COMP:15537"/>
        <dbReference type="Rhea" id="RHEA-COMP:15540"/>
        <dbReference type="ChEBI" id="CHEBI:15379"/>
        <dbReference type="ChEBI" id="CHEBI:16526"/>
        <dbReference type="ChEBI" id="CHEBI:16810"/>
        <dbReference type="ChEBI" id="CHEBI:16842"/>
        <dbReference type="ChEBI" id="CHEBI:30031"/>
        <dbReference type="ChEBI" id="CHEBI:61961"/>
        <dbReference type="ChEBI" id="CHEBI:61976"/>
    </reaction>
    <physiologicalReaction direction="left-to-right" evidence="7">
        <dbReference type="Rhea" id="RHEA:60213"/>
    </physiologicalReaction>
</comment>
<comment type="catalytic activity">
    <reaction evidence="7">
        <text>N(6),N(6)-dimethyl-L-lysyl(4)-[histone H3] + 2-oxoglutarate + O2 = N(6)-methyl-L-lysyl(4)-[histone H3] + formaldehyde + succinate + CO2</text>
        <dbReference type="Rhea" id="RHEA:60216"/>
        <dbReference type="Rhea" id="RHEA-COMP:15540"/>
        <dbReference type="Rhea" id="RHEA-COMP:15543"/>
        <dbReference type="ChEBI" id="CHEBI:15379"/>
        <dbReference type="ChEBI" id="CHEBI:16526"/>
        <dbReference type="ChEBI" id="CHEBI:16810"/>
        <dbReference type="ChEBI" id="CHEBI:16842"/>
        <dbReference type="ChEBI" id="CHEBI:30031"/>
        <dbReference type="ChEBI" id="CHEBI:61929"/>
        <dbReference type="ChEBI" id="CHEBI:61976"/>
    </reaction>
    <physiologicalReaction direction="left-to-right" evidence="7">
        <dbReference type="Rhea" id="RHEA:60217"/>
    </physiologicalReaction>
</comment>
<comment type="catalytic activity">
    <reaction evidence="7">
        <text>N(6)-methyl-L-lysyl(4)-[histone H3] + 2-oxoglutarate + O2 = L-lysyl(4)-[histone H3] + formaldehyde + succinate + CO2</text>
        <dbReference type="Rhea" id="RHEA:60220"/>
        <dbReference type="Rhea" id="RHEA-COMP:15543"/>
        <dbReference type="Rhea" id="RHEA-COMP:15547"/>
        <dbReference type="ChEBI" id="CHEBI:15379"/>
        <dbReference type="ChEBI" id="CHEBI:16526"/>
        <dbReference type="ChEBI" id="CHEBI:16810"/>
        <dbReference type="ChEBI" id="CHEBI:16842"/>
        <dbReference type="ChEBI" id="CHEBI:29969"/>
        <dbReference type="ChEBI" id="CHEBI:30031"/>
        <dbReference type="ChEBI" id="CHEBI:61929"/>
    </reaction>
    <physiologicalReaction direction="left-to-right" evidence="7">
        <dbReference type="Rhea" id="RHEA:60221"/>
    </physiologicalReaction>
</comment>
<comment type="catalytic activity">
    <reaction evidence="7">
        <text>N(6),N(6),N(6)-trimethyl-L-lysyl(4)-[histone H3] + 3 2-oxoglutarate + 3 O2 = L-lysyl(4)-[histone H3] + 3 formaldehyde + 3 succinate + 3 CO2</text>
        <dbReference type="Rhea" id="RHEA:60208"/>
        <dbReference type="Rhea" id="RHEA-COMP:15537"/>
        <dbReference type="Rhea" id="RHEA-COMP:15547"/>
        <dbReference type="ChEBI" id="CHEBI:15379"/>
        <dbReference type="ChEBI" id="CHEBI:16526"/>
        <dbReference type="ChEBI" id="CHEBI:16810"/>
        <dbReference type="ChEBI" id="CHEBI:16842"/>
        <dbReference type="ChEBI" id="CHEBI:29969"/>
        <dbReference type="ChEBI" id="CHEBI:30031"/>
        <dbReference type="ChEBI" id="CHEBI:61961"/>
        <dbReference type="EC" id="1.14.11.67"/>
    </reaction>
    <physiologicalReaction direction="left-to-right" evidence="7">
        <dbReference type="Rhea" id="RHEA:60209"/>
    </physiologicalReaction>
</comment>
<comment type="cofactor">
    <cofactor evidence="1">
        <name>Fe(2+)</name>
        <dbReference type="ChEBI" id="CHEBI:29033"/>
    </cofactor>
    <text evidence="1">Binds 1 Fe(2+) ion per subunit.</text>
</comment>
<comment type="subcellular location">
    <subcellularLocation>
        <location evidence="5 7">Nucleus</location>
    </subcellularLocation>
</comment>
<comment type="tissue specificity">
    <text evidence="6 7">Expressed in inflorescences, roots, seedlings and siliques, and, at low levels, in leaves and stems.</text>
</comment>
<comment type="developmental stage">
    <text evidence="7">At the seedling stage, present in the veins of cotyledons, hypocotyls, roots and germinated seedlings (PubMed:31038749). Later observed in leaves, primary and secondary roots, floral tissues, siliques and guard cells (PubMed:31038749).</text>
</comment>
<comment type="induction">
    <text evidence="7">Slightly reduced in guard cells upon dehydration stress and abscisic acid (ABA) treatment.</text>
</comment>
<comment type="disruption phenotype">
    <text evidence="7">Increased dehydration stress tolerance associated with abscisic acid (ABA) hypersensitivity during stomatal closure regulation (PubMed:31038749). Ectopic increase in genome-wide H3K4me1, H3K4me2 and H3K4me3 levels and activation of several dehydration stress-responsive genes, including OST1 (PubMed:31038749). The double mutants jmj17-1 jmj14-1 and jmj17-1 jmj16-1 have an early flowering phenotype (especially in long day conditions) (PubMed:31038749). The triple mutant jmj17-1 jmj14-1 jmj16-1 flowers even earlier (PubMed:31038749).</text>
</comment>
<comment type="similarity">
    <text evidence="9">Belongs to the JARID1 histone demethylase family.</text>
</comment>
<comment type="sequence caution" evidence="9">
    <conflict type="erroneous gene model prediction">
        <sequence resource="EMBL-CDS" id="AAF19696"/>
    </conflict>
</comment>
<comment type="sequence caution" evidence="9">
    <conflict type="erroneous initiation">
        <sequence resource="EMBL-CDS" id="AAK64062"/>
    </conflict>
    <text>Truncated N-terminus.</text>
</comment>
<feature type="chain" id="PRO_0000456189" description="Lysine-specific demethylase JMJ17">
    <location>
        <begin position="1"/>
        <end position="1208"/>
    </location>
</feature>
<feature type="domain" description="JmjC" evidence="4">
    <location>
        <begin position="126"/>
        <end position="292"/>
    </location>
</feature>
<feature type="zinc finger region" description="PHD-type 1; degenerate" evidence="3">
    <location>
        <begin position="1"/>
        <end position="36"/>
    </location>
</feature>
<feature type="zinc finger region" description="C5HC2" evidence="2">
    <location>
        <begin position="369"/>
        <end position="421"/>
    </location>
</feature>
<feature type="zinc finger region" description="PHD-type 2" evidence="3">
    <location>
        <begin position="1099"/>
        <end position="1145"/>
    </location>
</feature>
<feature type="short sequence motif" description="Nuclear localization signal" evidence="5">
    <location>
        <begin position="613"/>
        <end position="620"/>
    </location>
</feature>
<feature type="binding site" evidence="3">
    <location>
        <position position="4"/>
    </location>
    <ligand>
        <name>Zn(2+)</name>
        <dbReference type="ChEBI" id="CHEBI:29105"/>
        <label>1</label>
    </ligand>
</feature>
<feature type="binding site" evidence="3">
    <location>
        <position position="7"/>
    </location>
    <ligand>
        <name>Zn(2+)</name>
        <dbReference type="ChEBI" id="CHEBI:29105"/>
        <label>1</label>
    </ligand>
</feature>
<feature type="binding site" evidence="3">
    <location>
        <position position="30"/>
    </location>
    <ligand>
        <name>Zn(2+)</name>
        <dbReference type="ChEBI" id="CHEBI:29105"/>
        <label>1</label>
    </ligand>
</feature>
<feature type="binding site" evidence="3">
    <location>
        <position position="33"/>
    </location>
    <ligand>
        <name>Zn(2+)</name>
        <dbReference type="ChEBI" id="CHEBI:29105"/>
        <label>1</label>
    </ligand>
</feature>
<feature type="binding site" evidence="4">
    <location>
        <position position="172"/>
    </location>
    <ligand>
        <name>Fe cation</name>
        <dbReference type="ChEBI" id="CHEBI:24875"/>
        <note>catalytic</note>
    </ligand>
</feature>
<feature type="binding site" evidence="4">
    <location>
        <position position="174"/>
    </location>
    <ligand>
        <name>Fe cation</name>
        <dbReference type="ChEBI" id="CHEBI:24875"/>
        <note>catalytic</note>
    </ligand>
</feature>
<feature type="binding site" evidence="4">
    <location>
        <position position="260"/>
    </location>
    <ligand>
        <name>Fe cation</name>
        <dbReference type="ChEBI" id="CHEBI:24875"/>
        <note>catalytic</note>
    </ligand>
</feature>
<feature type="binding site" evidence="1">
    <location>
        <position position="369"/>
    </location>
    <ligand>
        <name>Zn(2+)</name>
        <dbReference type="ChEBI" id="CHEBI:29105"/>
        <label>2</label>
    </ligand>
</feature>
<feature type="binding site" evidence="1">
    <location>
        <position position="372"/>
    </location>
    <ligand>
        <name>Zn(2+)</name>
        <dbReference type="ChEBI" id="CHEBI:29105"/>
        <label>2</label>
    </ligand>
</feature>
<feature type="binding site" evidence="1">
    <location>
        <position position="383"/>
    </location>
    <ligand>
        <name>Zn(2+)</name>
        <dbReference type="ChEBI" id="CHEBI:29105"/>
        <label>3</label>
    </ligand>
</feature>
<feature type="binding site" evidence="1">
    <location>
        <position position="385"/>
    </location>
    <ligand>
        <name>Zn(2+)</name>
        <dbReference type="ChEBI" id="CHEBI:29105"/>
        <label>3</label>
    </ligand>
</feature>
<feature type="binding site" evidence="1">
    <location>
        <position position="392"/>
    </location>
    <ligand>
        <name>Zn(2+)</name>
        <dbReference type="ChEBI" id="CHEBI:29105"/>
        <label>2</label>
    </ligand>
</feature>
<feature type="binding site" evidence="1">
    <location>
        <position position="395"/>
    </location>
    <ligand>
        <name>Zn(2+)</name>
        <dbReference type="ChEBI" id="CHEBI:29105"/>
        <label>2</label>
    </ligand>
</feature>
<feature type="binding site" evidence="1">
    <location>
        <position position="400"/>
    </location>
    <ligand>
        <name>Zn(2+)</name>
        <dbReference type="ChEBI" id="CHEBI:29105"/>
        <label>3</label>
    </ligand>
</feature>
<feature type="binding site" evidence="1">
    <location>
        <position position="402"/>
    </location>
    <ligand>
        <name>Zn(2+)</name>
        <dbReference type="ChEBI" id="CHEBI:29105"/>
        <label>3</label>
    </ligand>
</feature>
<feature type="binding site" evidence="3">
    <location>
        <position position="1102"/>
    </location>
    <ligand>
        <name>Zn(2+)</name>
        <dbReference type="ChEBI" id="CHEBI:29105"/>
        <label>4</label>
    </ligand>
</feature>
<feature type="binding site" evidence="3">
    <location>
        <position position="1104"/>
    </location>
    <ligand>
        <name>Zn(2+)</name>
        <dbReference type="ChEBI" id="CHEBI:29105"/>
        <label>4</label>
    </ligand>
</feature>
<feature type="binding site" evidence="3">
    <location>
        <position position="1116"/>
    </location>
    <ligand>
        <name>Zn(2+)</name>
        <dbReference type="ChEBI" id="CHEBI:29105"/>
        <label>5</label>
    </ligand>
</feature>
<feature type="binding site" evidence="3">
    <location>
        <position position="1119"/>
    </location>
    <ligand>
        <name>Zn(2+)</name>
        <dbReference type="ChEBI" id="CHEBI:29105"/>
        <label>5</label>
    </ligand>
</feature>
<feature type="binding site" evidence="3">
    <location>
        <position position="1124"/>
    </location>
    <ligand>
        <name>Zn(2+)</name>
        <dbReference type="ChEBI" id="CHEBI:29105"/>
        <label>4</label>
    </ligand>
</feature>
<feature type="binding site" evidence="3">
    <location>
        <position position="1127"/>
    </location>
    <ligand>
        <name>Zn(2+)</name>
        <dbReference type="ChEBI" id="CHEBI:29105"/>
        <label>4</label>
    </ligand>
</feature>
<feature type="binding site" evidence="3">
    <location>
        <position position="1139"/>
    </location>
    <ligand>
        <name>Zn(2+)</name>
        <dbReference type="ChEBI" id="CHEBI:29105"/>
        <label>5</label>
    </ligand>
</feature>
<feature type="binding site" evidence="3">
    <location>
        <position position="1142"/>
    </location>
    <ligand>
        <name>Zn(2+)</name>
        <dbReference type="ChEBI" id="CHEBI:29105"/>
        <label>5</label>
    </ligand>
</feature>
<feature type="mutagenesis site" description="Abolished histone H3 'Lys-4' (H3K4me) demethylase activity toward H3K4me1, H3K4me2 and H3K4me3 leading to ectopic increase in genome-wide H3K4me1, H3K4me2 and H3K4me3 levels and a better dehydration stress tolerance; when associated with A-174." evidence="7">
    <original>H</original>
    <variation>A</variation>
    <location>
        <position position="172"/>
    </location>
</feature>
<feature type="mutagenesis site" description="Abolished histone H3 'Lys-4' (H3K4me) demethylase activity toward H3K4me1, H3K4me2 and H3K4me3 leading to ectopic increase in genome-wide H3K4me1, H3K4me2 and H3K4me3 levels and a better dehydration stress tolerance; when associated with A-172." evidence="7">
    <original>E</original>
    <variation>A</variation>
    <location>
        <position position="174"/>
    </location>
</feature>
<feature type="sequence conflict" description="In Ref. 3; AAK64062/AAS46255." evidence="9" ref="3">
    <original>K</original>
    <variation>KQ</variation>
    <location>
        <position position="455"/>
    </location>
</feature>
<protein>
    <recommendedName>
        <fullName evidence="8">Lysine-specific demethylase JMJ17</fullName>
        <ecNumber evidence="7">1.14.11.67</ecNumber>
    </recommendedName>
    <alternativeName>
        <fullName evidence="8">Jumonji domain-containing protein 17</fullName>
        <shortName evidence="8">AtJMJ17</shortName>
        <shortName evidence="8">Protein JUMONJI 17</shortName>
    </alternativeName>
    <alternativeName>
        <fullName evidence="8">Lysine-specific histone demethylase JMJ17</fullName>
    </alternativeName>
    <alternativeName>
        <fullName evidence="9">[histone H3]-trimethyl-L-lysine(4) monodemethylase JMJ17</fullName>
    </alternativeName>
</protein>
<name>JMJ17_ARATH</name>
<sequence>MLLCDSCNKGWHIYCLSPPLKHIPLGNWYCLECLNTDEETFGFVPGKCLLLEDFKRIADRAKRKWFGSGTVSRTQIEKKFWEIVEGSGGEVEVMYGNDLDTSVYGSGFPRIGDQRPESVEADIWDEYCGSPWNLNNMPKLKGSMLQAIRHNINGVTVPWLYLGMLFSSFCWHFEDHCFYSVNYLHWGEAKCWYGIPGSAASAFEKVMRKTLPDLFDAQPDLLFQLVTMLSPTVLQENKVPVYTVLQEPGNFVITFPKSFHAGFNFGLNCAEAVNFATADWLPYGGSGAELYRLYRKPSVISHEELLCVVAKGNCCNNEGSIHLKKELLRIYSKEKTWREQLWKSGILRSSPMFVPECADSVGIEEDPTCIICQQFLHLSAIVCNCRPSVFACLEHWKHLCECEPTKLRLEYRYTLAELDMMVQEVEKFGGCKTQETKISQRPSSGTKRSIALNKKEGMQVSQARPADKWLLRASKVLDAAFSSVEYATLLKESEQFLWAGSEMDRVRDVTKSLNKAKIWAEAVSDCLSKVEGEVNDDSMKVHLEFIDELLRVNPVPCFNSGYLKLKDYAEEARKLSEKIDSALSSSPTITQLELLHSEVSRSPISLKKHEILSKKISSAKMLAKRAKRYLTDAKPPGIEMDALFKLNSEMLELHVQLPETEGILDLVKKSESARDKSNKVLTGSLSLENVEELLHEFDSFSINVPELNILRQYHVDTLSWISRFNDVMVDVREGKDQRKLISDLSSLLRDGASLGIQVEGLPLVEVELKKASCREKARTVYTARKSLDFIEQLLSEAVILHIEEEEIFVEISGILSTARCWEERASTILENETQMYELKDLVRMSVNIDAVLPTLQGIENTISSAETWLQKSEPFLSATSSMASSPCSMLELPVLKDLVTQAKLLNVQLQEPRILETLLLNCERWQCDNHQLLQETEDLLDNAKIDDGTHSNILPKIMDLITRVDSARRSGLALGLNFDELPKLRTASLKLGWCCKTITLSSSSPTSELLEDVGKPSLQHIQQHLKEGQTLEILPEEYYLGKRLMELKDTGLEWAKRARKVVTDSGALALEDVFELISEGENLPVHAEQELQSLRARSMLHCICLKPYNSRSMVSCSQCGEWYHTYCLKLHWRPKAYVCSACCPLAETTPQIDPARATEPERPSLNQRRTRMVATDAAVNDLKWKTRKHIKRTTKRSPQVHILPWFFT</sequence>